<name>BSAZ_BURP2</name>
<feature type="chain" id="PRO_0000429785" description="Secretion apparatus protein BsaZ">
    <location>
        <begin position="1"/>
        <end position="411"/>
    </location>
</feature>
<feature type="transmembrane region" description="Helical" evidence="1">
    <location>
        <begin position="28"/>
        <end position="48"/>
    </location>
</feature>
<feature type="transmembrane region" description="Helical" evidence="1">
    <location>
        <begin position="80"/>
        <end position="100"/>
    </location>
</feature>
<feature type="transmembrane region" description="Helical" evidence="1">
    <location>
        <begin position="137"/>
        <end position="157"/>
    </location>
</feature>
<feature type="transmembrane region" description="Helical" evidence="1">
    <location>
        <begin position="175"/>
        <end position="195"/>
    </location>
</feature>
<feature type="region of interest" description="Disordered" evidence="2">
    <location>
        <begin position="341"/>
        <end position="411"/>
    </location>
</feature>
<feature type="compositionally biased region" description="Low complexity" evidence="2">
    <location>
        <begin position="370"/>
        <end position="404"/>
    </location>
</feature>
<comment type="function">
    <text evidence="3">Part of the bsa type III secretion system, is involved in the intracellular replication of invading bacteria inside the host cell. Probably necessary for the lysis of the vacuole membrane and escape into the host cell cytoplasm.</text>
</comment>
<comment type="subcellular location">
    <subcellularLocation>
        <location evidence="4">Cell membrane</location>
        <topology evidence="4">Multi-pass membrane protein</topology>
    </subcellularLocation>
</comment>
<comment type="similarity">
    <text evidence="4">Belongs to the type III secretion exporter family.</text>
</comment>
<proteinExistence type="inferred from homology"/>
<accession>I1WUC2</accession>
<sequence>MAEKTEKPTAKKLRDAAKKGQTFKARDIVALIVIATGALAAPALVDLTRIAAEFVRIASTGAQPNPGAYAFAWAKLFLRIAAPFVLLCAAAGALPSLVQSRFTLAVESIRFDLTALDPVKGMKRLFSWRSAKDAVKALLYVGVFALTVRVFAGLYHADVFGLFRARPALLGHMWIVLTVRLVLLFLLCALPVLILDAAVEYFLYHRELKMDKHEVKQEYKESEGNHEIKSKRREIHQELLSEEIKANVEQSDFIVANPTHIAIGVYVNPDIVPIPFVSVRETNARALAVIRHAEACGVPVVRNVALARSIYRNSPRRYSFVSHDDIDGVMRVLIWLGEVEAANRGGPPPETRAPTSAEPQARDGVAPPGDACADNAFPDDAPPGAAAPNAGSPDGPAPDGGAPARTGDQNA</sequence>
<organism>
    <name type="scientific">Burkholderia pseudomallei (strain 1026b)</name>
    <dbReference type="NCBI Taxonomy" id="884204"/>
    <lineage>
        <taxon>Bacteria</taxon>
        <taxon>Pseudomonadati</taxon>
        <taxon>Pseudomonadota</taxon>
        <taxon>Betaproteobacteria</taxon>
        <taxon>Burkholderiales</taxon>
        <taxon>Burkholderiaceae</taxon>
        <taxon>Burkholderia</taxon>
        <taxon>pseudomallei group</taxon>
    </lineage>
</organism>
<keyword id="KW-1003">Cell membrane</keyword>
<keyword id="KW-0472">Membrane</keyword>
<keyword id="KW-0812">Transmembrane</keyword>
<keyword id="KW-1133">Transmembrane helix</keyword>
<keyword id="KW-0843">Virulence</keyword>
<reference key="1">
    <citation type="journal article" date="2012" name="PLoS ONE">
        <title>Evolution of Burkholderia pseudomallei in recurrent melioidosis.</title>
        <authorList>
            <person name="Hayden H.S."/>
            <person name="Lim R."/>
            <person name="Brittnacher M.J."/>
            <person name="Sims E.H."/>
            <person name="Ramage E.R."/>
            <person name="Fong C."/>
            <person name="Wu Z."/>
            <person name="Crist E."/>
            <person name="Chang J."/>
            <person name="Zhou Y."/>
            <person name="Radey M."/>
            <person name="Rohmer L."/>
            <person name="Haugen E."/>
            <person name="Gillett W."/>
            <person name="Wuthiekanun V."/>
            <person name="Peacock S.J."/>
            <person name="Kaul R."/>
            <person name="Miller S.I."/>
            <person name="Manoil C."/>
            <person name="Jacobs M.A."/>
        </authorList>
    </citation>
    <scope>NUCLEOTIDE SEQUENCE [LARGE SCALE GENOMIC DNA]</scope>
    <source>
        <strain>1026b</strain>
    </source>
</reference>
<reference key="2">
    <citation type="journal article" date="2008" name="Infect. Immun.">
        <title>Burkholderia pseudomallei type III secretion system mutants exhibit delayed vacuolar escape phenotypes in RAW 264.7 murine macrophages.</title>
        <authorList>
            <person name="Burtnick M.N."/>
            <person name="Brett P.J."/>
            <person name="Nair V."/>
            <person name="Warawa J.M."/>
            <person name="Woods D.E."/>
            <person name="Gherardini F.C."/>
        </authorList>
    </citation>
    <scope>ROLE IN ESCAPE FROM VACUOLES</scope>
    <source>
        <strain>1026b</strain>
    </source>
</reference>
<evidence type="ECO:0000255" key="1"/>
<evidence type="ECO:0000256" key="2">
    <source>
        <dbReference type="SAM" id="MobiDB-lite"/>
    </source>
</evidence>
<evidence type="ECO:0000269" key="3">
    <source>
    </source>
</evidence>
<evidence type="ECO:0000305" key="4"/>
<gene>
    <name type="primary">bsaZ</name>
    <name type="ordered locus">BP1026B_II1630</name>
</gene>
<protein>
    <recommendedName>
        <fullName>Secretion apparatus protein BsaZ</fullName>
    </recommendedName>
</protein>
<dbReference type="EMBL" id="CP002834">
    <property type="protein sequence ID" value="AFI69866.1"/>
    <property type="molecule type" value="Genomic_DNA"/>
</dbReference>
<dbReference type="RefSeq" id="WP_004530588.1">
    <property type="nucleotide sequence ID" value="NZ_CP004380.1"/>
</dbReference>
<dbReference type="SMR" id="I1WUC2"/>
<dbReference type="KEGG" id="bpz:BP1026B_II1630"/>
<dbReference type="PATRIC" id="fig|884204.3.peg.6016"/>
<dbReference type="Proteomes" id="UP000010087">
    <property type="component" value="Chromosome 2"/>
</dbReference>
<dbReference type="GO" id="GO:0005886">
    <property type="term" value="C:plasma membrane"/>
    <property type="evidence" value="ECO:0007669"/>
    <property type="project" value="UniProtKB-SubCell"/>
</dbReference>
<dbReference type="GO" id="GO:0009306">
    <property type="term" value="P:protein secretion"/>
    <property type="evidence" value="ECO:0007669"/>
    <property type="project" value="InterPro"/>
</dbReference>
<dbReference type="Gene3D" id="6.10.250.2080">
    <property type="match status" value="1"/>
</dbReference>
<dbReference type="Gene3D" id="3.40.1690.10">
    <property type="entry name" value="secretion proteins EscU"/>
    <property type="match status" value="1"/>
</dbReference>
<dbReference type="InterPro" id="IPR006307">
    <property type="entry name" value="BsaZ-like"/>
</dbReference>
<dbReference type="InterPro" id="IPR006135">
    <property type="entry name" value="T3SS_substrate_exporter"/>
</dbReference>
<dbReference type="InterPro" id="IPR029025">
    <property type="entry name" value="T3SS_substrate_exporter_C"/>
</dbReference>
<dbReference type="NCBIfam" id="TIGR01404">
    <property type="entry name" value="FlhB_rel_III"/>
    <property type="match status" value="1"/>
</dbReference>
<dbReference type="NCBIfam" id="NF006017">
    <property type="entry name" value="PRK08156.1"/>
    <property type="match status" value="1"/>
</dbReference>
<dbReference type="PANTHER" id="PTHR30531">
    <property type="entry name" value="FLAGELLAR BIOSYNTHETIC PROTEIN FLHB"/>
    <property type="match status" value="1"/>
</dbReference>
<dbReference type="PANTHER" id="PTHR30531:SF14">
    <property type="entry name" value="SURFACE PRESENTATION OF ANTIGENS PROTEIN SPAS"/>
    <property type="match status" value="1"/>
</dbReference>
<dbReference type="Pfam" id="PF01312">
    <property type="entry name" value="Bac_export_2"/>
    <property type="match status" value="1"/>
</dbReference>
<dbReference type="PRINTS" id="PR00950">
    <property type="entry name" value="TYPE3IMSPROT"/>
</dbReference>
<dbReference type="SUPFAM" id="SSF160544">
    <property type="entry name" value="EscU C-terminal domain-like"/>
    <property type="match status" value="1"/>
</dbReference>